<organism>
    <name type="scientific">Streptococcus agalactiae serotype Ia (strain ATCC 27591 / A909 / CDC SS700)</name>
    <dbReference type="NCBI Taxonomy" id="205921"/>
    <lineage>
        <taxon>Bacteria</taxon>
        <taxon>Bacillati</taxon>
        <taxon>Bacillota</taxon>
        <taxon>Bacilli</taxon>
        <taxon>Lactobacillales</taxon>
        <taxon>Streptococcaceae</taxon>
        <taxon>Streptococcus</taxon>
    </lineage>
</organism>
<reference key="1">
    <citation type="journal article" date="2005" name="Proc. Natl. Acad. Sci. U.S.A.">
        <title>Genome analysis of multiple pathogenic isolates of Streptococcus agalactiae: implications for the microbial 'pan-genome'.</title>
        <authorList>
            <person name="Tettelin H."/>
            <person name="Masignani V."/>
            <person name="Cieslewicz M.J."/>
            <person name="Donati C."/>
            <person name="Medini D."/>
            <person name="Ward N.L."/>
            <person name="Angiuoli S.V."/>
            <person name="Crabtree J."/>
            <person name="Jones A.L."/>
            <person name="Durkin A.S."/>
            <person name="DeBoy R.T."/>
            <person name="Davidsen T.M."/>
            <person name="Mora M."/>
            <person name="Scarselli M."/>
            <person name="Margarit y Ros I."/>
            <person name="Peterson J.D."/>
            <person name="Hauser C.R."/>
            <person name="Sundaram J.P."/>
            <person name="Nelson W.C."/>
            <person name="Madupu R."/>
            <person name="Brinkac L.M."/>
            <person name="Dodson R.J."/>
            <person name="Rosovitz M.J."/>
            <person name="Sullivan S.A."/>
            <person name="Daugherty S.C."/>
            <person name="Haft D.H."/>
            <person name="Selengut J."/>
            <person name="Gwinn M.L."/>
            <person name="Zhou L."/>
            <person name="Zafar N."/>
            <person name="Khouri H."/>
            <person name="Radune D."/>
            <person name="Dimitrov G."/>
            <person name="Watkins K."/>
            <person name="O'Connor K.J."/>
            <person name="Smith S."/>
            <person name="Utterback T.R."/>
            <person name="White O."/>
            <person name="Rubens C.E."/>
            <person name="Grandi G."/>
            <person name="Madoff L.C."/>
            <person name="Kasper D.L."/>
            <person name="Telford J.L."/>
            <person name="Wessels M.R."/>
            <person name="Rappuoli R."/>
            <person name="Fraser C.M."/>
        </authorList>
    </citation>
    <scope>NUCLEOTIDE SEQUENCE [LARGE SCALE GENOMIC DNA]</scope>
    <source>
        <strain>ATCC 27591 / A909 / CDC SS700</strain>
    </source>
</reference>
<feature type="chain" id="PRO_0000237100" description="Small ribosomal subunit protein uS10">
    <location>
        <begin position="1"/>
        <end position="102"/>
    </location>
</feature>
<gene>
    <name evidence="1" type="primary">rpsJ</name>
    <name type="ordered locus">SAK_0090</name>
</gene>
<proteinExistence type="inferred from homology"/>
<sequence length="102" mass="11614">MANKKIRIRLKAYEHRTLDTAAEKIVETATRTGATVAGPVPLPTERSLYTIIRATHKYKDSREQFEMRTHKRLVDIINPTQKTVDALMKLDLPSGVNVEIKL</sequence>
<evidence type="ECO:0000255" key="1">
    <source>
        <dbReference type="HAMAP-Rule" id="MF_00508"/>
    </source>
</evidence>
<evidence type="ECO:0000305" key="2"/>
<dbReference type="EMBL" id="CP000114">
    <property type="protein sequence ID" value="ABA45721.1"/>
    <property type="molecule type" value="Genomic_DNA"/>
</dbReference>
<dbReference type="RefSeq" id="WP_001284518.1">
    <property type="nucleotide sequence ID" value="NC_007432.1"/>
</dbReference>
<dbReference type="SMR" id="Q3K3X0"/>
<dbReference type="GeneID" id="69900025"/>
<dbReference type="KEGG" id="sak:SAK_0090"/>
<dbReference type="HOGENOM" id="CLU_122625_1_3_9"/>
<dbReference type="GO" id="GO:1990904">
    <property type="term" value="C:ribonucleoprotein complex"/>
    <property type="evidence" value="ECO:0007669"/>
    <property type="project" value="UniProtKB-KW"/>
</dbReference>
<dbReference type="GO" id="GO:0005840">
    <property type="term" value="C:ribosome"/>
    <property type="evidence" value="ECO:0007669"/>
    <property type="project" value="UniProtKB-KW"/>
</dbReference>
<dbReference type="GO" id="GO:0003735">
    <property type="term" value="F:structural constituent of ribosome"/>
    <property type="evidence" value="ECO:0007669"/>
    <property type="project" value="InterPro"/>
</dbReference>
<dbReference type="GO" id="GO:0000049">
    <property type="term" value="F:tRNA binding"/>
    <property type="evidence" value="ECO:0007669"/>
    <property type="project" value="UniProtKB-UniRule"/>
</dbReference>
<dbReference type="GO" id="GO:0006412">
    <property type="term" value="P:translation"/>
    <property type="evidence" value="ECO:0007669"/>
    <property type="project" value="UniProtKB-UniRule"/>
</dbReference>
<dbReference type="FunFam" id="3.30.70.600:FF:000001">
    <property type="entry name" value="30S ribosomal protein S10"/>
    <property type="match status" value="1"/>
</dbReference>
<dbReference type="Gene3D" id="3.30.70.600">
    <property type="entry name" value="Ribosomal protein S10 domain"/>
    <property type="match status" value="1"/>
</dbReference>
<dbReference type="HAMAP" id="MF_00508">
    <property type="entry name" value="Ribosomal_uS10"/>
    <property type="match status" value="1"/>
</dbReference>
<dbReference type="InterPro" id="IPR001848">
    <property type="entry name" value="Ribosomal_uS10"/>
</dbReference>
<dbReference type="InterPro" id="IPR018268">
    <property type="entry name" value="Ribosomal_uS10_CS"/>
</dbReference>
<dbReference type="InterPro" id="IPR027486">
    <property type="entry name" value="Ribosomal_uS10_dom"/>
</dbReference>
<dbReference type="InterPro" id="IPR036838">
    <property type="entry name" value="Ribosomal_uS10_dom_sf"/>
</dbReference>
<dbReference type="NCBIfam" id="NF001861">
    <property type="entry name" value="PRK00596.1"/>
    <property type="match status" value="1"/>
</dbReference>
<dbReference type="NCBIfam" id="TIGR01049">
    <property type="entry name" value="rpsJ_bact"/>
    <property type="match status" value="1"/>
</dbReference>
<dbReference type="PANTHER" id="PTHR11700">
    <property type="entry name" value="30S RIBOSOMAL PROTEIN S10 FAMILY MEMBER"/>
    <property type="match status" value="1"/>
</dbReference>
<dbReference type="Pfam" id="PF00338">
    <property type="entry name" value="Ribosomal_S10"/>
    <property type="match status" value="1"/>
</dbReference>
<dbReference type="PRINTS" id="PR00971">
    <property type="entry name" value="RIBOSOMALS10"/>
</dbReference>
<dbReference type="SMART" id="SM01403">
    <property type="entry name" value="Ribosomal_S10"/>
    <property type="match status" value="1"/>
</dbReference>
<dbReference type="SUPFAM" id="SSF54999">
    <property type="entry name" value="Ribosomal protein S10"/>
    <property type="match status" value="1"/>
</dbReference>
<dbReference type="PROSITE" id="PS00361">
    <property type="entry name" value="RIBOSOMAL_S10"/>
    <property type="match status" value="1"/>
</dbReference>
<comment type="function">
    <text evidence="1">Involved in the binding of tRNA to the ribosomes.</text>
</comment>
<comment type="subunit">
    <text evidence="1">Part of the 30S ribosomal subunit.</text>
</comment>
<comment type="similarity">
    <text evidence="1">Belongs to the universal ribosomal protein uS10 family.</text>
</comment>
<protein>
    <recommendedName>
        <fullName evidence="1">Small ribosomal subunit protein uS10</fullName>
    </recommendedName>
    <alternativeName>
        <fullName evidence="2">30S ribosomal protein S10</fullName>
    </alternativeName>
</protein>
<name>RS10_STRA1</name>
<keyword id="KW-0687">Ribonucleoprotein</keyword>
<keyword id="KW-0689">Ribosomal protein</keyword>
<accession>Q3K3X0</accession>